<reference key="1">
    <citation type="submission" date="2006-01" db="EMBL/GenBank/DDBJ databases">
        <title>Complete sequence of Novosphingobium aromaticivorans DSM 12444.</title>
        <authorList>
            <consortium name="US DOE Joint Genome Institute"/>
            <person name="Copeland A."/>
            <person name="Lucas S."/>
            <person name="Lapidus A."/>
            <person name="Barry K."/>
            <person name="Detter J.C."/>
            <person name="Glavina T."/>
            <person name="Hammon N."/>
            <person name="Israni S."/>
            <person name="Pitluck S."/>
            <person name="Chain P."/>
            <person name="Malfatti S."/>
            <person name="Shin M."/>
            <person name="Vergez L."/>
            <person name="Schmutz J."/>
            <person name="Larimer F."/>
            <person name="Land M."/>
            <person name="Kyrpides N."/>
            <person name="Ivanova N."/>
            <person name="Fredrickson J."/>
            <person name="Balkwill D."/>
            <person name="Romine M.F."/>
            <person name="Richardson P."/>
        </authorList>
    </citation>
    <scope>NUCLEOTIDE SEQUENCE [LARGE SCALE GENOMIC DNA]</scope>
    <source>
        <strain>ATCC 700278 / DSM 12444 / CCUG 56034 / CIP 105152 / NBRC 16084 / F199</strain>
    </source>
</reference>
<proteinExistence type="inferred from homology"/>
<name>RPOZ_NOVAD</name>
<keyword id="KW-0240">DNA-directed RNA polymerase</keyword>
<keyword id="KW-0548">Nucleotidyltransferase</keyword>
<keyword id="KW-1185">Reference proteome</keyword>
<keyword id="KW-0804">Transcription</keyword>
<keyword id="KW-0808">Transferase</keyword>
<gene>
    <name evidence="1" type="primary">rpoZ</name>
    <name type="ordered locus">Saro_0141</name>
</gene>
<accession>Q2GC33</accession>
<dbReference type="EC" id="2.7.7.6" evidence="1"/>
<dbReference type="EMBL" id="CP000248">
    <property type="protein sequence ID" value="ABD24590.1"/>
    <property type="molecule type" value="Genomic_DNA"/>
</dbReference>
<dbReference type="RefSeq" id="WP_011443804.1">
    <property type="nucleotide sequence ID" value="NC_007794.1"/>
</dbReference>
<dbReference type="SMR" id="Q2GC33"/>
<dbReference type="STRING" id="279238.Saro_0141"/>
<dbReference type="KEGG" id="nar:Saro_0141"/>
<dbReference type="eggNOG" id="COG1758">
    <property type="taxonomic scope" value="Bacteria"/>
</dbReference>
<dbReference type="HOGENOM" id="CLU_125406_2_0_5"/>
<dbReference type="Proteomes" id="UP000009134">
    <property type="component" value="Chromosome"/>
</dbReference>
<dbReference type="GO" id="GO:0000428">
    <property type="term" value="C:DNA-directed RNA polymerase complex"/>
    <property type="evidence" value="ECO:0007669"/>
    <property type="project" value="UniProtKB-KW"/>
</dbReference>
<dbReference type="GO" id="GO:0003677">
    <property type="term" value="F:DNA binding"/>
    <property type="evidence" value="ECO:0007669"/>
    <property type="project" value="UniProtKB-UniRule"/>
</dbReference>
<dbReference type="GO" id="GO:0003899">
    <property type="term" value="F:DNA-directed RNA polymerase activity"/>
    <property type="evidence" value="ECO:0007669"/>
    <property type="project" value="UniProtKB-UniRule"/>
</dbReference>
<dbReference type="GO" id="GO:0006351">
    <property type="term" value="P:DNA-templated transcription"/>
    <property type="evidence" value="ECO:0007669"/>
    <property type="project" value="UniProtKB-UniRule"/>
</dbReference>
<dbReference type="Gene3D" id="3.90.940.10">
    <property type="match status" value="1"/>
</dbReference>
<dbReference type="HAMAP" id="MF_00366">
    <property type="entry name" value="RNApol_bact_RpoZ"/>
    <property type="match status" value="1"/>
</dbReference>
<dbReference type="InterPro" id="IPR003716">
    <property type="entry name" value="DNA-dir_RNA_pol_omega"/>
</dbReference>
<dbReference type="InterPro" id="IPR006110">
    <property type="entry name" value="Pol_omega/Rpo6/RPB6"/>
</dbReference>
<dbReference type="InterPro" id="IPR036161">
    <property type="entry name" value="RPB6/omega-like_sf"/>
</dbReference>
<dbReference type="NCBIfam" id="TIGR00690">
    <property type="entry name" value="rpoZ"/>
    <property type="match status" value="1"/>
</dbReference>
<dbReference type="PANTHER" id="PTHR34476">
    <property type="entry name" value="DNA-DIRECTED RNA POLYMERASE SUBUNIT OMEGA"/>
    <property type="match status" value="1"/>
</dbReference>
<dbReference type="PANTHER" id="PTHR34476:SF1">
    <property type="entry name" value="DNA-DIRECTED RNA POLYMERASE SUBUNIT OMEGA"/>
    <property type="match status" value="1"/>
</dbReference>
<dbReference type="Pfam" id="PF01192">
    <property type="entry name" value="RNA_pol_Rpb6"/>
    <property type="match status" value="1"/>
</dbReference>
<dbReference type="SMART" id="SM01409">
    <property type="entry name" value="RNA_pol_Rpb6"/>
    <property type="match status" value="1"/>
</dbReference>
<dbReference type="SUPFAM" id="SSF63562">
    <property type="entry name" value="RPB6/omega subunit-like"/>
    <property type="match status" value="1"/>
</dbReference>
<protein>
    <recommendedName>
        <fullName evidence="1">DNA-directed RNA polymerase subunit omega</fullName>
        <shortName evidence="1">RNAP omega subunit</shortName>
        <ecNumber evidence="1">2.7.7.6</ecNumber>
    </recommendedName>
    <alternativeName>
        <fullName evidence="1">RNA polymerase omega subunit</fullName>
    </alternativeName>
    <alternativeName>
        <fullName evidence="1">Transcriptase subunit omega</fullName>
    </alternativeName>
</protein>
<sequence>MARVTVEDCVDKVPNRFDLVLLAAERARAISGGAELTVDRDRDKNPVVALREIAEETVRPAVLKENLIQSLQRVLPDDDDEVDEIGSLSQSAEALRITAAAPVRNTSLGADYDG</sequence>
<feature type="chain" id="PRO_0000237482" description="DNA-directed RNA polymerase subunit omega">
    <location>
        <begin position="1"/>
        <end position="114"/>
    </location>
</feature>
<organism>
    <name type="scientific">Novosphingobium aromaticivorans (strain ATCC 700278 / DSM 12444 / CCUG 56034 / CIP 105152 / NBRC 16084 / F199)</name>
    <dbReference type="NCBI Taxonomy" id="279238"/>
    <lineage>
        <taxon>Bacteria</taxon>
        <taxon>Pseudomonadati</taxon>
        <taxon>Pseudomonadota</taxon>
        <taxon>Alphaproteobacteria</taxon>
        <taxon>Sphingomonadales</taxon>
        <taxon>Sphingomonadaceae</taxon>
        <taxon>Novosphingobium</taxon>
    </lineage>
</organism>
<comment type="function">
    <text evidence="1">Promotes RNA polymerase assembly. Latches the N- and C-terminal regions of the beta' subunit thereby facilitating its interaction with the beta and alpha subunits.</text>
</comment>
<comment type="catalytic activity">
    <reaction evidence="1">
        <text>RNA(n) + a ribonucleoside 5'-triphosphate = RNA(n+1) + diphosphate</text>
        <dbReference type="Rhea" id="RHEA:21248"/>
        <dbReference type="Rhea" id="RHEA-COMP:14527"/>
        <dbReference type="Rhea" id="RHEA-COMP:17342"/>
        <dbReference type="ChEBI" id="CHEBI:33019"/>
        <dbReference type="ChEBI" id="CHEBI:61557"/>
        <dbReference type="ChEBI" id="CHEBI:140395"/>
        <dbReference type="EC" id="2.7.7.6"/>
    </reaction>
</comment>
<comment type="subunit">
    <text evidence="1">The RNAP catalytic core consists of 2 alpha, 1 beta, 1 beta' and 1 omega subunit. When a sigma factor is associated with the core the holoenzyme is formed, which can initiate transcription.</text>
</comment>
<comment type="similarity">
    <text evidence="1">Belongs to the RNA polymerase subunit omega family.</text>
</comment>
<evidence type="ECO:0000255" key="1">
    <source>
        <dbReference type="HAMAP-Rule" id="MF_00366"/>
    </source>
</evidence>